<organism evidence="8">
    <name type="scientific">Rattus norvegicus</name>
    <name type="common">Rat</name>
    <dbReference type="NCBI Taxonomy" id="10116"/>
    <lineage>
        <taxon>Eukaryota</taxon>
        <taxon>Metazoa</taxon>
        <taxon>Chordata</taxon>
        <taxon>Craniata</taxon>
        <taxon>Vertebrata</taxon>
        <taxon>Euteleostomi</taxon>
        <taxon>Mammalia</taxon>
        <taxon>Eutheria</taxon>
        <taxon>Euarchontoglires</taxon>
        <taxon>Glires</taxon>
        <taxon>Rodentia</taxon>
        <taxon>Myomorpha</taxon>
        <taxon>Muroidea</taxon>
        <taxon>Muridae</taxon>
        <taxon>Murinae</taxon>
        <taxon>Rattus</taxon>
    </lineage>
</organism>
<name>EXOSX_RAT</name>
<proteinExistence type="evidence at protein level"/>
<gene>
    <name evidence="9" type="primary">Exosc10</name>
</gene>
<sequence length="885" mass="100719">MAPPSPREHQSAPATGATKPDAEMVLPGFPDADSFVKFALGSVVAVTKASGGLPQVGDEYDFYRSFPAFQAFCETQGDRLLQCMSRVMQYHGCRSNIKDRSKVTELEDKFDLLVDTNDVILERVGILLDEASGVNKHQQPVLPAGLQVPKTIVSSWNRKAGEYGKKAKAETFRLLHAKNILRPQLRFREKIDNSNTPFLPKIFVKPNARKPLPQALSKERRERPQDRPEDLDVPPALADFIHQQRAQQVEQDVFAHPYQYELDHFTPPPSVLQRPQPQLYRPVEETPCHVVSSLDELVELNEKLLGCQEFAVDLEHHSYRSFLGLTCLMQISTRTEDFIVDTLELRSDMYILNESLTDPAIVKVFHGADSDIEWLQKDFGLYVVNMFDTHQAARLLNLARHSLDHLLRLYCGVESNKQYQLADWRIRPLPEEMLNYARDDTHYLLYIYDRMRLELWERGNDQPVQLQVVWQRSRDICLKKFVKPIFTDESYLELYRKQKKHLNSQQLTAFQLLFAWRDKTARREDESYGYVLPNHMMLKIAEELPKEPQGIIACCNPVPPLVRQQINEMHLLIQQAREMPLLKSETAAGVKKSGPLPSAERLENDLFGPHDCSHAPPDNYPVTSTDGTMPLQKQPSLFDEGKEETSVDARCLLATAVITLFSEPSTEEAGKTPLTVAQKKAQSIMESFENPFRMFLPSLENKAHISQAAKFDPSSKIYEISNRWKLASQVQKEPKEAAKKKVAEQTAAREETKEESTAAVLEQPIPVRQQAALENATKKRERATSDLRTIEQKQEKKRLKSSKKAKDPDPPGKDFSPYDYSQSDFGAFAGDSKSKPSSQFDPNKVAPSGKKCFGAKKFKQSVGNKSMSFPAGKSDRGFRHNWPKR</sequence>
<dbReference type="EC" id="3.1.13.-" evidence="2"/>
<dbReference type="RefSeq" id="NP_001386158.1">
    <property type="nucleotide sequence ID" value="NM_001399229.1"/>
</dbReference>
<dbReference type="RefSeq" id="XP_003750136.1">
    <property type="nucleotide sequence ID" value="XM_003750088.4"/>
</dbReference>
<dbReference type="RefSeq" id="XP_003754164.1">
    <property type="nucleotide sequence ID" value="XM_003754116.4"/>
</dbReference>
<dbReference type="SMR" id="D4A1X2"/>
<dbReference type="FunCoup" id="D4A1X2">
    <property type="interactions" value="4228"/>
</dbReference>
<dbReference type="STRING" id="10116.ENSRNOP00000014629"/>
<dbReference type="iPTMnet" id="D4A1X2"/>
<dbReference type="PhosphoSitePlus" id="D4A1X2"/>
<dbReference type="PaxDb" id="10116-ENSRNOP00000014629"/>
<dbReference type="PeptideAtlas" id="D4A1X2"/>
<dbReference type="Ensembl" id="ENSRNOT00000014629.6">
    <property type="protein sequence ID" value="ENSRNOP00000014629.3"/>
    <property type="gene ID" value="ENSRNOG00000010719.6"/>
</dbReference>
<dbReference type="GeneID" id="313707"/>
<dbReference type="AGR" id="RGD:1593248"/>
<dbReference type="RGD" id="1593248">
    <property type="gene designation" value="Exosc10"/>
</dbReference>
<dbReference type="eggNOG" id="KOG2206">
    <property type="taxonomic scope" value="Eukaryota"/>
</dbReference>
<dbReference type="GeneTree" id="ENSGT00390000015408"/>
<dbReference type="HOGENOM" id="CLU_010129_1_1_1"/>
<dbReference type="OrthoDB" id="2250022at2759"/>
<dbReference type="TreeFam" id="TF105991"/>
<dbReference type="Reactome" id="R-RNO-6791226">
    <property type="pathway name" value="Major pathway of rRNA processing in the nucleolus and cytosol"/>
</dbReference>
<dbReference type="PRO" id="PR:D4A1X2"/>
<dbReference type="Proteomes" id="UP000002494">
    <property type="component" value="Chromosome 5"/>
</dbReference>
<dbReference type="Bgee" id="ENSRNOG00000010719">
    <property type="expression patterns" value="Expressed in thymus and 20 other cell types or tissues"/>
</dbReference>
<dbReference type="GO" id="GO:0005737">
    <property type="term" value="C:cytoplasm"/>
    <property type="evidence" value="ECO:0000266"/>
    <property type="project" value="RGD"/>
</dbReference>
<dbReference type="GO" id="GO:0005829">
    <property type="term" value="C:cytosol"/>
    <property type="evidence" value="ECO:0000266"/>
    <property type="project" value="RGD"/>
</dbReference>
<dbReference type="GO" id="GO:0000791">
    <property type="term" value="C:euchromatin"/>
    <property type="evidence" value="ECO:0000266"/>
    <property type="project" value="RGD"/>
</dbReference>
<dbReference type="GO" id="GO:0000178">
    <property type="term" value="C:exosome (RNase complex)"/>
    <property type="evidence" value="ECO:0000266"/>
    <property type="project" value="RGD"/>
</dbReference>
<dbReference type="GO" id="GO:0000176">
    <property type="term" value="C:nuclear exosome (RNase complex)"/>
    <property type="evidence" value="ECO:0000266"/>
    <property type="project" value="RGD"/>
</dbReference>
<dbReference type="GO" id="GO:0005730">
    <property type="term" value="C:nucleolus"/>
    <property type="evidence" value="ECO:0000266"/>
    <property type="project" value="RGD"/>
</dbReference>
<dbReference type="GO" id="GO:0005654">
    <property type="term" value="C:nucleoplasm"/>
    <property type="evidence" value="ECO:0007669"/>
    <property type="project" value="UniProtKB-SubCell"/>
</dbReference>
<dbReference type="GO" id="GO:0005634">
    <property type="term" value="C:nucleus"/>
    <property type="evidence" value="ECO:0000266"/>
    <property type="project" value="RGD"/>
</dbReference>
<dbReference type="GO" id="GO:0032040">
    <property type="term" value="C:small-subunit processome"/>
    <property type="evidence" value="ECO:0000266"/>
    <property type="project" value="RGD"/>
</dbReference>
<dbReference type="GO" id="GO:0000175">
    <property type="term" value="F:3'-5'-RNA exonuclease activity"/>
    <property type="evidence" value="ECO:0000266"/>
    <property type="project" value="RGD"/>
</dbReference>
<dbReference type="GO" id="GO:0046872">
    <property type="term" value="F:metal ion binding"/>
    <property type="evidence" value="ECO:0007669"/>
    <property type="project" value="UniProtKB-KW"/>
</dbReference>
<dbReference type="GO" id="GO:0000166">
    <property type="term" value="F:nucleotide binding"/>
    <property type="evidence" value="ECO:0007669"/>
    <property type="project" value="InterPro"/>
</dbReference>
<dbReference type="GO" id="GO:0004532">
    <property type="term" value="F:RNA exonuclease activity"/>
    <property type="evidence" value="ECO:0000266"/>
    <property type="project" value="RGD"/>
</dbReference>
<dbReference type="GO" id="GO:0003727">
    <property type="term" value="F:single-stranded RNA binding"/>
    <property type="evidence" value="ECO:0000318"/>
    <property type="project" value="GO_Central"/>
</dbReference>
<dbReference type="GO" id="GO:0070034">
    <property type="term" value="F:telomerase RNA binding"/>
    <property type="evidence" value="ECO:0000266"/>
    <property type="project" value="RGD"/>
</dbReference>
<dbReference type="GO" id="GO:0071034">
    <property type="term" value="P:CUT catabolic process"/>
    <property type="evidence" value="ECO:0000266"/>
    <property type="project" value="RGD"/>
</dbReference>
<dbReference type="GO" id="GO:0006281">
    <property type="term" value="P:DNA repair"/>
    <property type="evidence" value="ECO:0007669"/>
    <property type="project" value="UniProtKB-KW"/>
</dbReference>
<dbReference type="GO" id="GO:0000467">
    <property type="term" value="P:exonucleolytic trimming to generate mature 3'-end of 5.8S rRNA from tricistronic rRNA transcript (SSU-rRNA, 5.8S rRNA, LSU-rRNA)"/>
    <property type="evidence" value="ECO:0000318"/>
    <property type="project" value="GO_Central"/>
</dbReference>
<dbReference type="GO" id="GO:0071044">
    <property type="term" value="P:histone mRNA catabolic process"/>
    <property type="evidence" value="ECO:0000266"/>
    <property type="project" value="RGD"/>
</dbReference>
<dbReference type="GO" id="GO:0000460">
    <property type="term" value="P:maturation of 5.8S rRNA"/>
    <property type="evidence" value="ECO:0000266"/>
    <property type="project" value="RGD"/>
</dbReference>
<dbReference type="GO" id="GO:0032211">
    <property type="term" value="P:negative regulation of telomere maintenance via telomerase"/>
    <property type="evidence" value="ECO:0000266"/>
    <property type="project" value="RGD"/>
</dbReference>
<dbReference type="GO" id="GO:0071028">
    <property type="term" value="P:nuclear mRNA surveillance"/>
    <property type="evidence" value="ECO:0000266"/>
    <property type="project" value="RGD"/>
</dbReference>
<dbReference type="GO" id="GO:0071040">
    <property type="term" value="P:nuclear polyadenylation-dependent antisense transcript catabolic process"/>
    <property type="evidence" value="ECO:0000318"/>
    <property type="project" value="GO_Central"/>
</dbReference>
<dbReference type="GO" id="GO:0071039">
    <property type="term" value="P:nuclear polyadenylation-dependent CUT catabolic process"/>
    <property type="evidence" value="ECO:0000318"/>
    <property type="project" value="GO_Central"/>
</dbReference>
<dbReference type="GO" id="GO:0071035">
    <property type="term" value="P:nuclear polyadenylation-dependent rRNA catabolic process"/>
    <property type="evidence" value="ECO:0000266"/>
    <property type="project" value="RGD"/>
</dbReference>
<dbReference type="GO" id="GO:0071036">
    <property type="term" value="P:nuclear polyadenylation-dependent snoRNA catabolic process"/>
    <property type="evidence" value="ECO:0000318"/>
    <property type="project" value="GO_Central"/>
</dbReference>
<dbReference type="GO" id="GO:0071037">
    <property type="term" value="P:nuclear polyadenylation-dependent snRNA catabolic process"/>
    <property type="evidence" value="ECO:0000318"/>
    <property type="project" value="GO_Central"/>
</dbReference>
<dbReference type="GO" id="GO:0000956">
    <property type="term" value="P:nuclear-transcribed mRNA catabolic process"/>
    <property type="evidence" value="ECO:0000266"/>
    <property type="project" value="RGD"/>
</dbReference>
<dbReference type="GO" id="GO:0000184">
    <property type="term" value="P:nuclear-transcribed mRNA catabolic process, nonsense-mediated decay"/>
    <property type="evidence" value="ECO:0007669"/>
    <property type="project" value="UniProtKB-KW"/>
</dbReference>
<dbReference type="GO" id="GO:0071051">
    <property type="term" value="P:poly(A)-dependent snoRNA 3'-end processing"/>
    <property type="evidence" value="ECO:0000318"/>
    <property type="project" value="GO_Central"/>
</dbReference>
<dbReference type="GO" id="GO:1905746">
    <property type="term" value="P:positive regulation of mRNA cis splicing, via spliceosome"/>
    <property type="evidence" value="ECO:0000266"/>
    <property type="project" value="RGD"/>
</dbReference>
<dbReference type="GO" id="GO:1904872">
    <property type="term" value="P:regulation of telomerase RNA localization to Cajal body"/>
    <property type="evidence" value="ECO:0000266"/>
    <property type="project" value="RGD"/>
</dbReference>
<dbReference type="GO" id="GO:0042274">
    <property type="term" value="P:ribosomal small subunit biogenesis"/>
    <property type="evidence" value="ECO:0000266"/>
    <property type="project" value="RGD"/>
</dbReference>
<dbReference type="GO" id="GO:0006401">
    <property type="term" value="P:RNA catabolic process"/>
    <property type="evidence" value="ECO:0000266"/>
    <property type="project" value="RGD"/>
</dbReference>
<dbReference type="GO" id="GO:0006396">
    <property type="term" value="P:RNA processing"/>
    <property type="evidence" value="ECO:0000266"/>
    <property type="project" value="RGD"/>
</dbReference>
<dbReference type="GO" id="GO:0071038">
    <property type="term" value="P:TRAMP-dependent tRNA surveillance pathway"/>
    <property type="evidence" value="ECO:0000318"/>
    <property type="project" value="GO_Central"/>
</dbReference>
<dbReference type="CDD" id="cd06147">
    <property type="entry name" value="Rrp6p_like_exo"/>
    <property type="match status" value="1"/>
</dbReference>
<dbReference type="FunFam" id="3.30.420.10:FF:000022">
    <property type="entry name" value="Exosome component 10"/>
    <property type="match status" value="1"/>
</dbReference>
<dbReference type="FunFam" id="1.10.150.80:FF:000001">
    <property type="entry name" value="Putative exosome component 10"/>
    <property type="match status" value="1"/>
</dbReference>
<dbReference type="Gene3D" id="1.10.150.80">
    <property type="entry name" value="HRDC domain"/>
    <property type="match status" value="1"/>
</dbReference>
<dbReference type="Gene3D" id="3.30.420.10">
    <property type="entry name" value="Ribonuclease H-like superfamily/Ribonuclease H"/>
    <property type="match status" value="1"/>
</dbReference>
<dbReference type="InterPro" id="IPR002562">
    <property type="entry name" value="3'-5'_exonuclease_dom"/>
</dbReference>
<dbReference type="InterPro" id="IPR012588">
    <property type="entry name" value="Exosome-assoc_fac_Rrp6_N"/>
</dbReference>
<dbReference type="InterPro" id="IPR010997">
    <property type="entry name" value="HRDC-like_sf"/>
</dbReference>
<dbReference type="InterPro" id="IPR002121">
    <property type="entry name" value="HRDC_dom"/>
</dbReference>
<dbReference type="InterPro" id="IPR044876">
    <property type="entry name" value="HRDC_dom_sf"/>
</dbReference>
<dbReference type="InterPro" id="IPR012337">
    <property type="entry name" value="RNaseH-like_sf"/>
</dbReference>
<dbReference type="InterPro" id="IPR036397">
    <property type="entry name" value="RNaseH_sf"/>
</dbReference>
<dbReference type="InterPro" id="IPR045092">
    <property type="entry name" value="Rrp6-like"/>
</dbReference>
<dbReference type="InterPro" id="IPR049559">
    <property type="entry name" value="Rrp6p-like_exo"/>
</dbReference>
<dbReference type="PANTHER" id="PTHR12124:SF47">
    <property type="entry name" value="EXOSOME COMPONENT 10"/>
    <property type="match status" value="1"/>
</dbReference>
<dbReference type="PANTHER" id="PTHR12124">
    <property type="entry name" value="POLYMYOSITIS/SCLERODERMA AUTOANTIGEN-RELATED"/>
    <property type="match status" value="1"/>
</dbReference>
<dbReference type="Pfam" id="PF01612">
    <property type="entry name" value="DNA_pol_A_exo1"/>
    <property type="match status" value="1"/>
</dbReference>
<dbReference type="Pfam" id="PF00570">
    <property type="entry name" value="HRDC"/>
    <property type="match status" value="1"/>
</dbReference>
<dbReference type="Pfam" id="PF08066">
    <property type="entry name" value="PMC2NT"/>
    <property type="match status" value="1"/>
</dbReference>
<dbReference type="SMART" id="SM00474">
    <property type="entry name" value="35EXOc"/>
    <property type="match status" value="1"/>
</dbReference>
<dbReference type="SMART" id="SM00341">
    <property type="entry name" value="HRDC"/>
    <property type="match status" value="1"/>
</dbReference>
<dbReference type="SUPFAM" id="SSF47819">
    <property type="entry name" value="HRDC-like"/>
    <property type="match status" value="1"/>
</dbReference>
<dbReference type="SUPFAM" id="SSF53098">
    <property type="entry name" value="Ribonuclease H-like"/>
    <property type="match status" value="1"/>
</dbReference>
<dbReference type="PROSITE" id="PS50967">
    <property type="entry name" value="HRDC"/>
    <property type="match status" value="1"/>
</dbReference>
<comment type="function">
    <text evidence="1 2">Catalytic component of the RNA exosome complex which has 3'-&gt;5' exoribonuclease activity and participates in a multitude of cellular RNA processing and degradation events. In the nucleus, the RNA exosome complex is involved in proper maturation of stable RNA species such as rRNA, snRNA and snoRNA, in the elimination of RNA processing by-products and non-coding 'pervasive' transcripts, such as antisense RNA species and promoter-upstream transcripts (PROMPTs), and of mRNAs with processing defects, thereby limiting or excluding their export to the cytoplasm. Part of the small subunit (SSU) processome, first precursor of the small eukaryotic ribosomal subunit. During the assembly of the SSU processome in the nucleolus, many ribosome biogenesis factors, an RNA chaperone and ribosomal proteins associate with the nascent pre-rRNA and work in concert to generate RNA folding, modifications, rearrangements and cleavage as well as targeted degradation of pre-ribosomal RNA by the RNA exosome. The RNA exosome may be involved in Ig class switch recombination (CSR) and/or Ig variable region somatic hypermutation (SHM) by targeting AICDA deamination activity to transcribed dsDNA substrates. In the cytoplasm, the RNA exosome complex is involved in general mRNA turnover and specifically degrades inherently unstable mRNAs containing AU-rich elements (AREs) within their 3' untranslated regions, and in RNA surveillance pathways, preventing translation of aberrant mRNAs. It seems to be involved in degradation of histone mRNA. EXOSC10 is required for nucleolar localization of C1D and probably mediates the association of MTREX, C1D and MPHOSPH6 with the RNA exosome involved in the maturation of 5.8S rRNA (By similarity). Plays a role in the recruitment of replication protein A complex (RPA) and RAD51 to DNA double-strand breaks caused by irradiation, contributing to DNA repair by homologous recombination (By similarity). Regulates levels of damage-induced RNAs in order to prevent DNA-RNA hybrid formation at DNA double-strand breaks and limit DNA end resection after damage (By similarity). Plays a role in oocyte development, maturation and survival (By similarity). Required for normal testis development and mitotic division of spermatogonia (By similarity). Plays a role in proper embryo development (By similarity). Required for global protein translation (By similarity). Required for cell proliferation (By similarity).</text>
</comment>
<comment type="cofactor">
    <cofactor evidence="2">
        <name>Mg(2+)</name>
        <dbReference type="ChEBI" id="CHEBI:18420"/>
    </cofactor>
</comment>
<comment type="subunit">
    <text evidence="2">Component of the RNA exosome complex (By similarity). The catalytically inactive RNA exosome core complex (Exo-9) associates with the catalytic subunit EXOSC10/RRP6 (via its N-terminus) (By similarity). Exo-9 may associate with DIS3 to form the nucleolar exosome complex, or DIS3L to form the cytoplasmic exosome complex (By similarity). The RNA exosome complex interacts with cofactors C1D/RRP47, MPHOSPH6/MPP6 and MTREX/MTR4 (By similarity). Interacts with MTREX; the interaction with MTREX mediates the association of MTREX with nuclear RNA exosomes (By similarity). Part of the small subunit (SSU) processome, composed of more than 70 proteins and the RNA chaperone small nucleolar RNA (snoRNA) U3 (By similarity). Interacts with ALYREF/THOC4 (By similarity). Interacts with DHX36; this interaction occurs in a RNase-insensitive manner (By similarity). Interacts with NRDE2 (By similarity). Interacts (via C-terminus) with USP36 (via C-terminus); the interaction is facilitated by the association with RNA and promotes sumoylation of EXOSC10 (By similarity).</text>
</comment>
<comment type="subcellular location">
    <subcellularLocation>
        <location evidence="2">Cytoplasm</location>
    </subcellularLocation>
    <subcellularLocation>
        <location evidence="2">Nucleus</location>
    </subcellularLocation>
    <subcellularLocation>
        <location evidence="6">Nucleus</location>
        <location evidence="6">Nucleolus</location>
    </subcellularLocation>
    <subcellularLocation>
        <location evidence="2">Nucleus</location>
        <location evidence="2">Nucleoplasm</location>
    </subcellularLocation>
    <text evidence="2">Strongly enriched in the nucleolus and a small amount has been found in cytoplasm supporting the existence of a nucleolar RNA exosome complex form.</text>
</comment>
<comment type="tissue specificity">
    <text evidence="6">Expressed in testis (at protein level).</text>
</comment>
<comment type="developmental stage">
    <text evidence="6">Expressed in spermatogonia and spermatocytes (at protein level) (PubMed:29118343). Levels decrease at later stages of male gamete development, with no detectable protein in elongating spermatids (PubMed:29118343).</text>
</comment>
<comment type="PTM">
    <text evidence="2">Sumoylated by USP36; sumoylation does not significantly affect EXOSC10 nucleolar localization and association with core exosome and USP36, but regulates the nucleolar RNA exosome activity in rRNA processing by promoting binding of EXOSC10 to pre-rRNAs. Effects of sumoylation on EXOSC10 levels vary between different studies. Sumoylation of EXOSC10 is required for the modulation of EXOSC10 effects on cellular protein translation and cell proliferation. Sumoylation is promoted by mild hypothermia.</text>
</comment>
<comment type="similarity">
    <text evidence="7">Belongs to the exosome component 10/RRP6 family.</text>
</comment>
<protein>
    <recommendedName>
        <fullName evidence="7">Exosome complex component 10</fullName>
        <ecNumber evidence="2">3.1.13.-</ecNumber>
    </recommendedName>
</protein>
<accession>D4A1X2</accession>
<reference evidence="8" key="1">
    <citation type="journal article" date="2004" name="Nature">
        <title>Genome sequence of the Brown Norway rat yields insights into mammalian evolution.</title>
        <authorList>
            <person name="Gibbs R.A."/>
            <person name="Weinstock G.M."/>
            <person name="Metzker M.L."/>
            <person name="Muzny D.M."/>
            <person name="Sodergren E.J."/>
            <person name="Scherer S."/>
            <person name="Scott G."/>
            <person name="Steffen D."/>
            <person name="Worley K.C."/>
            <person name="Burch P.E."/>
            <person name="Okwuonu G."/>
            <person name="Hines S."/>
            <person name="Lewis L."/>
            <person name="Deramo C."/>
            <person name="Delgado O."/>
            <person name="Dugan-Rocha S."/>
            <person name="Miner G."/>
            <person name="Morgan M."/>
            <person name="Hawes A."/>
            <person name="Gill R."/>
            <person name="Holt R.A."/>
            <person name="Adams M.D."/>
            <person name="Amanatides P.G."/>
            <person name="Baden-Tillson H."/>
            <person name="Barnstead M."/>
            <person name="Chin S."/>
            <person name="Evans C.A."/>
            <person name="Ferriera S."/>
            <person name="Fosler C."/>
            <person name="Glodek A."/>
            <person name="Gu Z."/>
            <person name="Jennings D."/>
            <person name="Kraft C.L."/>
            <person name="Nguyen T."/>
            <person name="Pfannkoch C.M."/>
            <person name="Sitter C."/>
            <person name="Sutton G.G."/>
            <person name="Venter J.C."/>
            <person name="Woodage T."/>
            <person name="Smith D."/>
            <person name="Lee H.-M."/>
            <person name="Gustafson E."/>
            <person name="Cahill P."/>
            <person name="Kana A."/>
            <person name="Doucette-Stamm L."/>
            <person name="Weinstock K."/>
            <person name="Fechtel K."/>
            <person name="Weiss R.B."/>
            <person name="Dunn D.M."/>
            <person name="Green E.D."/>
            <person name="Blakesley R.W."/>
            <person name="Bouffard G.G."/>
            <person name="De Jong P.J."/>
            <person name="Osoegawa K."/>
            <person name="Zhu B."/>
            <person name="Marra M."/>
            <person name="Schein J."/>
            <person name="Bosdet I."/>
            <person name="Fjell C."/>
            <person name="Jones S."/>
            <person name="Krzywinski M."/>
            <person name="Mathewson C."/>
            <person name="Siddiqui A."/>
            <person name="Wye N."/>
            <person name="McPherson J."/>
            <person name="Zhao S."/>
            <person name="Fraser C.M."/>
            <person name="Shetty J."/>
            <person name="Shatsman S."/>
            <person name="Geer K."/>
            <person name="Chen Y."/>
            <person name="Abramzon S."/>
            <person name="Nierman W.C."/>
            <person name="Havlak P.H."/>
            <person name="Chen R."/>
            <person name="Durbin K.J."/>
            <person name="Egan A."/>
            <person name="Ren Y."/>
            <person name="Song X.-Z."/>
            <person name="Li B."/>
            <person name="Liu Y."/>
            <person name="Qin X."/>
            <person name="Cawley S."/>
            <person name="Cooney A.J."/>
            <person name="D'Souza L.M."/>
            <person name="Martin K."/>
            <person name="Wu J.Q."/>
            <person name="Gonzalez-Garay M.L."/>
            <person name="Jackson A.R."/>
            <person name="Kalafus K.J."/>
            <person name="McLeod M.P."/>
            <person name="Milosavljevic A."/>
            <person name="Virk D."/>
            <person name="Volkov A."/>
            <person name="Wheeler D.A."/>
            <person name="Zhang Z."/>
            <person name="Bailey J.A."/>
            <person name="Eichler E.E."/>
            <person name="Tuzun E."/>
            <person name="Birney E."/>
            <person name="Mongin E."/>
            <person name="Ureta-Vidal A."/>
            <person name="Woodwark C."/>
            <person name="Zdobnov E."/>
            <person name="Bork P."/>
            <person name="Suyama M."/>
            <person name="Torrents D."/>
            <person name="Alexandersson M."/>
            <person name="Trask B.J."/>
            <person name="Young J.M."/>
            <person name="Huang H."/>
            <person name="Wang H."/>
            <person name="Xing H."/>
            <person name="Daniels S."/>
            <person name="Gietzen D."/>
            <person name="Schmidt J."/>
            <person name="Stevens K."/>
            <person name="Vitt U."/>
            <person name="Wingrove J."/>
            <person name="Camara F."/>
            <person name="Mar Alba M."/>
            <person name="Abril J.F."/>
            <person name="Guigo R."/>
            <person name="Smit A."/>
            <person name="Dubchak I."/>
            <person name="Rubin E.M."/>
            <person name="Couronne O."/>
            <person name="Poliakov A."/>
            <person name="Huebner N."/>
            <person name="Ganten D."/>
            <person name="Goesele C."/>
            <person name="Hummel O."/>
            <person name="Kreitler T."/>
            <person name="Lee Y.-A."/>
            <person name="Monti J."/>
            <person name="Schulz H."/>
            <person name="Zimdahl H."/>
            <person name="Himmelbauer H."/>
            <person name="Lehrach H."/>
            <person name="Jacob H.J."/>
            <person name="Bromberg S."/>
            <person name="Gullings-Handley J."/>
            <person name="Jensen-Seaman M.I."/>
            <person name="Kwitek A.E."/>
            <person name="Lazar J."/>
            <person name="Pasko D."/>
            <person name="Tonellato P.J."/>
            <person name="Twigger S."/>
            <person name="Ponting C.P."/>
            <person name="Duarte J.M."/>
            <person name="Rice S."/>
            <person name="Goodstadt L."/>
            <person name="Beatson S.A."/>
            <person name="Emes R.D."/>
            <person name="Winter E.E."/>
            <person name="Webber C."/>
            <person name="Brandt P."/>
            <person name="Nyakatura G."/>
            <person name="Adetobi M."/>
            <person name="Chiaromonte F."/>
            <person name="Elnitski L."/>
            <person name="Eswara P."/>
            <person name="Hardison R.C."/>
            <person name="Hou M."/>
            <person name="Kolbe D."/>
            <person name="Makova K."/>
            <person name="Miller W."/>
            <person name="Nekrutenko A."/>
            <person name="Riemer C."/>
            <person name="Schwartz S."/>
            <person name="Taylor J."/>
            <person name="Yang S."/>
            <person name="Zhang Y."/>
            <person name="Lindpaintner K."/>
            <person name="Andrews T.D."/>
            <person name="Caccamo M."/>
            <person name="Clamp M."/>
            <person name="Clarke L."/>
            <person name="Curwen V."/>
            <person name="Durbin R.M."/>
            <person name="Eyras E."/>
            <person name="Searle S.M."/>
            <person name="Cooper G.M."/>
            <person name="Batzoglou S."/>
            <person name="Brudno M."/>
            <person name="Sidow A."/>
            <person name="Stone E.A."/>
            <person name="Payseur B.A."/>
            <person name="Bourque G."/>
            <person name="Lopez-Otin C."/>
            <person name="Puente X.S."/>
            <person name="Chakrabarti K."/>
            <person name="Chatterji S."/>
            <person name="Dewey C."/>
            <person name="Pachter L."/>
            <person name="Bray N."/>
            <person name="Yap V.B."/>
            <person name="Caspi A."/>
            <person name="Tesler G."/>
            <person name="Pevzner P.A."/>
            <person name="Haussler D."/>
            <person name="Roskin K.M."/>
            <person name="Baertsch R."/>
            <person name="Clawson H."/>
            <person name="Furey T.S."/>
            <person name="Hinrichs A.S."/>
            <person name="Karolchik D."/>
            <person name="Kent W.J."/>
            <person name="Rosenbloom K.R."/>
            <person name="Trumbower H."/>
            <person name="Weirauch M."/>
            <person name="Cooper D.N."/>
            <person name="Stenson P.D."/>
            <person name="Ma B."/>
            <person name="Brent M."/>
            <person name="Arumugam M."/>
            <person name="Shteynberg D."/>
            <person name="Copley R.R."/>
            <person name="Taylor M.S."/>
            <person name="Riethman H."/>
            <person name="Mudunuri U."/>
            <person name="Peterson J."/>
            <person name="Guyer M."/>
            <person name="Felsenfeld A."/>
            <person name="Old S."/>
            <person name="Mockrin S."/>
            <person name="Collins F.S."/>
        </authorList>
    </citation>
    <scope>NUCLEOTIDE SEQUENCE [LARGE SCALE GENOMIC DNA]</scope>
    <source>
        <strain evidence="8">Brown Norway</strain>
    </source>
</reference>
<reference evidence="7" key="2">
    <citation type="journal article" date="2017" name="Sci. Rep.">
        <title>EXOSC10/Rrp6 is post-translationally regulated in male germ cells and controls the onset of spermatogenesis.</title>
        <authorList>
            <person name="Jamin S.P."/>
            <person name="Petit F.G."/>
            <person name="Kervarrec C."/>
            <person name="Smagulova F."/>
            <person name="Illner D."/>
            <person name="Scherthan H."/>
            <person name="Primig M."/>
        </authorList>
    </citation>
    <scope>SUBCELLULAR LOCATION</scope>
    <scope>TISSUE SPECIFICITY</scope>
    <scope>DEVELOPMENTAL STAGE</scope>
</reference>
<keyword id="KW-0963">Cytoplasm</keyword>
<keyword id="KW-0227">DNA damage</keyword>
<keyword id="KW-0234">DNA repair</keyword>
<keyword id="KW-0269">Exonuclease</keyword>
<keyword id="KW-0271">Exosome</keyword>
<keyword id="KW-0378">Hydrolase</keyword>
<keyword id="KW-1017">Isopeptide bond</keyword>
<keyword id="KW-0460">Magnesium</keyword>
<keyword id="KW-0479">Metal-binding</keyword>
<keyword id="KW-0866">Nonsense-mediated mRNA decay</keyword>
<keyword id="KW-0540">Nuclease</keyword>
<keyword id="KW-0539">Nucleus</keyword>
<keyword id="KW-0597">Phosphoprotein</keyword>
<keyword id="KW-1185">Reference proteome</keyword>
<keyword id="KW-0694">RNA-binding</keyword>
<keyword id="KW-0698">rRNA processing</keyword>
<keyword id="KW-0832">Ubl conjugation</keyword>
<evidence type="ECO:0000250" key="1">
    <source>
        <dbReference type="UniProtKB" id="P56960"/>
    </source>
</evidence>
<evidence type="ECO:0000250" key="2">
    <source>
        <dbReference type="UniProtKB" id="Q01780"/>
    </source>
</evidence>
<evidence type="ECO:0000255" key="3"/>
<evidence type="ECO:0000255" key="4">
    <source>
        <dbReference type="PROSITE-ProRule" id="PRU00328"/>
    </source>
</evidence>
<evidence type="ECO:0000256" key="5">
    <source>
        <dbReference type="SAM" id="MobiDB-lite"/>
    </source>
</evidence>
<evidence type="ECO:0000269" key="6">
    <source>
    </source>
</evidence>
<evidence type="ECO:0000305" key="7"/>
<evidence type="ECO:0000312" key="8">
    <source>
        <dbReference type="Proteomes" id="UP000002494"/>
    </source>
</evidence>
<evidence type="ECO:0000312" key="9">
    <source>
        <dbReference type="RGD" id="1593248"/>
    </source>
</evidence>
<feature type="chain" id="PRO_0000459438" description="Exosome complex component 10">
    <location>
        <begin position="1"/>
        <end position="885"/>
    </location>
</feature>
<feature type="domain" description="3'-5' exonuclease" evidence="3">
    <location>
        <begin position="289"/>
        <end position="455"/>
    </location>
</feature>
<feature type="domain" description="HRDC" evidence="4">
    <location>
        <begin position="503"/>
        <end position="583"/>
    </location>
</feature>
<feature type="region of interest" description="Disordered" evidence="5">
    <location>
        <begin position="1"/>
        <end position="23"/>
    </location>
</feature>
<feature type="region of interest" description="Disordered" evidence="5">
    <location>
        <begin position="210"/>
        <end position="232"/>
    </location>
</feature>
<feature type="region of interest" description="Disordered" evidence="5">
    <location>
        <begin position="730"/>
        <end position="885"/>
    </location>
</feature>
<feature type="compositionally biased region" description="Basic and acidic residues" evidence="5">
    <location>
        <begin position="1"/>
        <end position="10"/>
    </location>
</feature>
<feature type="compositionally biased region" description="Basic and acidic residues" evidence="5">
    <location>
        <begin position="217"/>
        <end position="230"/>
    </location>
</feature>
<feature type="compositionally biased region" description="Basic and acidic residues" evidence="5">
    <location>
        <begin position="732"/>
        <end position="756"/>
    </location>
</feature>
<feature type="compositionally biased region" description="Basic and acidic residues" evidence="5">
    <location>
        <begin position="776"/>
        <end position="794"/>
    </location>
</feature>
<feature type="binding site" evidence="2">
    <location>
        <position position="313"/>
    </location>
    <ligand>
        <name>Mg(2+)</name>
        <dbReference type="ChEBI" id="CHEBI:18420"/>
        <label>1</label>
    </ligand>
</feature>
<feature type="binding site" evidence="2">
    <location>
        <position position="313"/>
    </location>
    <ligand>
        <name>Mg(2+)</name>
        <dbReference type="ChEBI" id="CHEBI:18420"/>
        <label>2</label>
    </ligand>
</feature>
<feature type="binding site" evidence="2">
    <location>
        <position position="315"/>
    </location>
    <ligand>
        <name>Mg(2+)</name>
        <dbReference type="ChEBI" id="CHEBI:18420"/>
        <label>2</label>
    </ligand>
</feature>
<feature type="binding site" evidence="2">
    <location>
        <position position="371"/>
    </location>
    <ligand>
        <name>Mg(2+)</name>
        <dbReference type="ChEBI" id="CHEBI:18420"/>
        <label>1</label>
    </ligand>
</feature>
<feature type="binding site" evidence="2">
    <location>
        <position position="440"/>
    </location>
    <ligand>
        <name>Mg(2+)</name>
        <dbReference type="ChEBI" id="CHEBI:18420"/>
        <label>2</label>
    </ligand>
</feature>
<feature type="modified residue" description="Phosphoserine" evidence="2">
    <location>
        <position position="821"/>
    </location>
</feature>
<feature type="cross-link" description="Glycyl lysine isopeptide (Lys-Gly) (interchain with G-Cter in SUMO2)" evidence="2">
    <location>
        <position position="19"/>
    </location>
</feature>
<feature type="cross-link" description="Glycyl lysine isopeptide (Lys-Gly) (interchain with G-Cter in SUMO1); alternate" evidence="2">
    <location>
        <position position="583"/>
    </location>
</feature>
<feature type="cross-link" description="Glycyl lysine isopeptide (Lys-Gly) (interchain with G-Cter in SUMO2); alternate" evidence="2">
    <location>
        <position position="583"/>
    </location>
</feature>
<feature type="cross-link" description="Glycyl lysine isopeptide (Lys-Gly) (interchain with G-Cter in SUMO2)" evidence="2">
    <location>
        <position position="710"/>
    </location>
</feature>
<feature type="cross-link" description="Glycyl lysine isopeptide (Lys-Gly) (interchain with G-Cter in SUMO2)" evidence="2">
    <location>
        <position position="833"/>
    </location>
</feature>
<feature type="cross-link" description="Glycyl lysine isopeptide (Lys-Gly) (interchain with G-Cter in SUMO2)" evidence="2">
    <location>
        <position position="859"/>
    </location>
</feature>
<feature type="cross-link" description="Glycyl lysine isopeptide (Lys-Gly) (interchain with G-Cter in SUMO2)" evidence="2">
    <location>
        <position position="873"/>
    </location>
</feature>